<dbReference type="EC" id="1.2.1.79"/>
<dbReference type="EMBL" id="CP000325">
    <property type="protein sequence ID" value="ABL03732.1"/>
    <property type="molecule type" value="Genomic_DNA"/>
</dbReference>
<dbReference type="RefSeq" id="WP_011739354.1">
    <property type="nucleotide sequence ID" value="NC_008611.1"/>
</dbReference>
<dbReference type="SMR" id="A0PN13"/>
<dbReference type="KEGG" id="mul:MUL_1153"/>
<dbReference type="eggNOG" id="COG1012">
    <property type="taxonomic scope" value="Bacteria"/>
</dbReference>
<dbReference type="HOGENOM" id="CLU_005391_0_2_11"/>
<dbReference type="Proteomes" id="UP000000765">
    <property type="component" value="Chromosome"/>
</dbReference>
<dbReference type="GO" id="GO:0004030">
    <property type="term" value="F:aldehyde dehydrogenase [NAD(P)+] activity"/>
    <property type="evidence" value="ECO:0007669"/>
    <property type="project" value="InterPro"/>
</dbReference>
<dbReference type="GO" id="GO:0004777">
    <property type="term" value="F:succinate-semialdehyde dehydrogenase (NAD+) activity"/>
    <property type="evidence" value="ECO:0007669"/>
    <property type="project" value="TreeGrafter"/>
</dbReference>
<dbReference type="GO" id="GO:0036243">
    <property type="term" value="F:succinate-semialdehyde dehydrogenase (NADP+) activity"/>
    <property type="evidence" value="ECO:0007669"/>
    <property type="project" value="UniProtKB-EC"/>
</dbReference>
<dbReference type="GO" id="GO:0006099">
    <property type="term" value="P:tricarboxylic acid cycle"/>
    <property type="evidence" value="ECO:0007669"/>
    <property type="project" value="UniProtKB-KW"/>
</dbReference>
<dbReference type="CDD" id="cd07100">
    <property type="entry name" value="ALDH_SSADH1_GabD1"/>
    <property type="match status" value="1"/>
</dbReference>
<dbReference type="FunFam" id="3.40.309.10:FF:000010">
    <property type="entry name" value="Gamma-aminobutyraldehyde dehydrogenase"/>
    <property type="match status" value="1"/>
</dbReference>
<dbReference type="FunFam" id="3.40.605.10:FF:000012">
    <property type="entry name" value="NAD-dependent succinate-semialdehyde dehydrogenase"/>
    <property type="match status" value="1"/>
</dbReference>
<dbReference type="Gene3D" id="3.40.605.10">
    <property type="entry name" value="Aldehyde Dehydrogenase, Chain A, domain 1"/>
    <property type="match status" value="1"/>
</dbReference>
<dbReference type="Gene3D" id="3.40.309.10">
    <property type="entry name" value="Aldehyde Dehydrogenase, Chain A, domain 2"/>
    <property type="match status" value="1"/>
</dbReference>
<dbReference type="InterPro" id="IPR016161">
    <property type="entry name" value="Ald_DH/histidinol_DH"/>
</dbReference>
<dbReference type="InterPro" id="IPR016163">
    <property type="entry name" value="Ald_DH_C"/>
</dbReference>
<dbReference type="InterPro" id="IPR016160">
    <property type="entry name" value="Ald_DH_CS_CYS"/>
</dbReference>
<dbReference type="InterPro" id="IPR016162">
    <property type="entry name" value="Ald_DH_N"/>
</dbReference>
<dbReference type="InterPro" id="IPR015590">
    <property type="entry name" value="Aldehyde_DH_dom"/>
</dbReference>
<dbReference type="InterPro" id="IPR044148">
    <property type="entry name" value="ALDH_GabD1-like"/>
</dbReference>
<dbReference type="InterPro" id="IPR047110">
    <property type="entry name" value="GABD/Sad-like"/>
</dbReference>
<dbReference type="NCBIfam" id="NF006915">
    <property type="entry name" value="PRK09406.1"/>
    <property type="match status" value="1"/>
</dbReference>
<dbReference type="PANTHER" id="PTHR43217">
    <property type="entry name" value="SUCCINATE SEMIALDEHYDE DEHYDROGENASE [NAD(P)+] SAD"/>
    <property type="match status" value="1"/>
</dbReference>
<dbReference type="PANTHER" id="PTHR43217:SF1">
    <property type="entry name" value="SUCCINATE SEMIALDEHYDE DEHYDROGENASE [NAD(P)+] SAD"/>
    <property type="match status" value="1"/>
</dbReference>
<dbReference type="Pfam" id="PF00171">
    <property type="entry name" value="Aldedh"/>
    <property type="match status" value="1"/>
</dbReference>
<dbReference type="SUPFAM" id="SSF53720">
    <property type="entry name" value="ALDH-like"/>
    <property type="match status" value="1"/>
</dbReference>
<dbReference type="PROSITE" id="PS00070">
    <property type="entry name" value="ALDEHYDE_DEHYDR_CYS"/>
    <property type="match status" value="1"/>
</dbReference>
<comment type="function">
    <text evidence="1">Catalyzes the NADP(+)-dependent oxidation of succinate semialdehyde to succinate. It is believed to be the main source of succinate semialdehyde dehydrogenase activity in Mycobacterium (By similarity).</text>
</comment>
<comment type="catalytic activity">
    <reaction>
        <text>succinate semialdehyde + NADP(+) + H2O = succinate + NADPH + 2 H(+)</text>
        <dbReference type="Rhea" id="RHEA:13213"/>
        <dbReference type="ChEBI" id="CHEBI:15377"/>
        <dbReference type="ChEBI" id="CHEBI:15378"/>
        <dbReference type="ChEBI" id="CHEBI:30031"/>
        <dbReference type="ChEBI" id="CHEBI:57706"/>
        <dbReference type="ChEBI" id="CHEBI:57783"/>
        <dbReference type="ChEBI" id="CHEBI:58349"/>
        <dbReference type="EC" id="1.2.1.79"/>
    </reaction>
</comment>
<comment type="similarity">
    <text evidence="3">Belongs to the aldehyde dehydrogenase family.</text>
</comment>
<evidence type="ECO:0000250" key="1"/>
<evidence type="ECO:0000255" key="2">
    <source>
        <dbReference type="PROSITE-ProRule" id="PRU10008"/>
    </source>
</evidence>
<evidence type="ECO:0000305" key="3"/>
<reference key="1">
    <citation type="journal article" date="2007" name="Genome Res.">
        <title>Reductive evolution and niche adaptation inferred from the genome of Mycobacterium ulcerans, the causative agent of Buruli ulcer.</title>
        <authorList>
            <person name="Stinear T.P."/>
            <person name="Seemann T."/>
            <person name="Pidot S."/>
            <person name="Frigui W."/>
            <person name="Reysset G."/>
            <person name="Garnier T."/>
            <person name="Meurice G."/>
            <person name="Simon D."/>
            <person name="Bouchier C."/>
            <person name="Ma L."/>
            <person name="Tichit M."/>
            <person name="Porter J.L."/>
            <person name="Ryan J."/>
            <person name="Johnson P.D.R."/>
            <person name="Davies J.K."/>
            <person name="Jenkin G.A."/>
            <person name="Small P.L.C."/>
            <person name="Jones L.M."/>
            <person name="Tekaia F."/>
            <person name="Laval F."/>
            <person name="Daffe M."/>
            <person name="Parkhill J."/>
            <person name="Cole S.T."/>
        </authorList>
    </citation>
    <scope>NUCLEOTIDE SEQUENCE [LARGE SCALE GENOMIC DNA]</scope>
    <source>
        <strain>Agy99</strain>
    </source>
</reference>
<gene>
    <name type="primary">gabD1</name>
    <name type="ordered locus">MUL_1153</name>
</gene>
<proteinExistence type="inferred from homology"/>
<accession>A0PN13</accession>
<feature type="chain" id="PRO_0000310707" description="Succinate-semialdehyde dehydrogenase [NADP(+)] 1">
    <location>
        <begin position="1"/>
        <end position="458"/>
    </location>
</feature>
<feature type="active site" description="Proton acceptor" evidence="2">
    <location>
        <position position="232"/>
    </location>
</feature>
<feature type="active site" description="Nucleophile" evidence="2">
    <location>
        <position position="266"/>
    </location>
</feature>
<feature type="binding site" evidence="1">
    <location>
        <begin position="134"/>
        <end position="135"/>
    </location>
    <ligand>
        <name>NADP(+)</name>
        <dbReference type="ChEBI" id="CHEBI:58349"/>
    </ligand>
</feature>
<feature type="binding site" evidence="1">
    <location>
        <begin position="158"/>
        <end position="161"/>
    </location>
    <ligand>
        <name>NADP(+)</name>
        <dbReference type="ChEBI" id="CHEBI:58349"/>
    </ligand>
</feature>
<feature type="binding site" evidence="1">
    <location>
        <begin position="210"/>
        <end position="211"/>
    </location>
    <ligand>
        <name>NADP(+)</name>
        <dbReference type="ChEBI" id="CHEBI:58349"/>
    </ligand>
</feature>
<feature type="binding site" evidence="1">
    <location>
        <position position="233"/>
    </location>
    <ligand>
        <name>NADP(+)</name>
        <dbReference type="ChEBI" id="CHEBI:58349"/>
    </ligand>
</feature>
<feature type="binding site" evidence="1">
    <location>
        <position position="363"/>
    </location>
    <ligand>
        <name>NADP(+)</name>
        <dbReference type="ChEBI" id="CHEBI:58349"/>
    </ligand>
</feature>
<sequence>MPIATTNPATGETVKTFTAASNDEVDAAIARAYARFQDYRRNTTFAQRAEWAHATADLIEAEADQTAALMTLEMGKTIASAKAEVLKSAKGFRYYADNAAALLADEPADAGKVGASQAYTRYQPLGVVLAVMPWNFPLWQAGRFAAPALMAGNVGLLKHASNVPQSALYLADVIARAGFPDGCFQTLLVSASAVEGILRDPRVAAATLTGSEPAGQSVGAIAGDEIKPTVLELGGSDPFIVMPSADLDKAVSTAVTGRVQNNGQSCIAAKRFIAHADIYDAFVDKFVEQMSALTVGDPTDPQTQVGPLATEQSRDEIAQQVDDAAAAGAVIRCGGKPLAGPGWYYPPTVITDITKDMNLYTEEVFGPVASVYRAADIDEAIEIANATTFGLGSNAWTQDEAEQRRFINDIEAGQVFINGMTVSYPELPFGGIKRSGYGRELAGHGIREFCNIKTVWVG</sequence>
<name>GABD1_MYCUA</name>
<protein>
    <recommendedName>
        <fullName>Succinate-semialdehyde dehydrogenase [NADP(+)] 1</fullName>
        <shortName>SSADH 1</shortName>
        <shortName>SSDH 1</shortName>
        <ecNumber>1.2.1.79</ecNumber>
    </recommendedName>
</protein>
<keyword id="KW-0521">NADP</keyword>
<keyword id="KW-0560">Oxidoreductase</keyword>
<keyword id="KW-0816">Tricarboxylic acid cycle</keyword>
<organism>
    <name type="scientific">Mycobacterium ulcerans (strain Agy99)</name>
    <dbReference type="NCBI Taxonomy" id="362242"/>
    <lineage>
        <taxon>Bacteria</taxon>
        <taxon>Bacillati</taxon>
        <taxon>Actinomycetota</taxon>
        <taxon>Actinomycetes</taxon>
        <taxon>Mycobacteriales</taxon>
        <taxon>Mycobacteriaceae</taxon>
        <taxon>Mycobacterium</taxon>
        <taxon>Mycobacterium ulcerans group</taxon>
    </lineage>
</organism>